<sequence>MKNLLSMSDAKNEVNAILEIASGLKSGEITEKPLTNKYIGMIFEKSSTRTRVSFEVGIHQLGGTPLYLSSKDLQLNRGEPIEDTARVLSRFLDGIMIRAKKHENVEELVQYSTIPIISGLTDKEHPCQIFADLLTIKEYKGDFNDKKIVFIGDGNNVCNSLLLAAAYVGMDMTVACPEGYEPNEKIYTLAKQEAQKTNSTIKIENNVNEAVKDADVLYTDVWVSMGDEDEQDERERIFKPYQINNELLSQAKDDAIVMHCLPAIRGQEITADVMVSPQSAIWDQAENRLHAQKAILYHIFKE</sequence>
<accession>Q2NI83</accession>
<evidence type="ECO:0000250" key="1"/>
<evidence type="ECO:0000255" key="2">
    <source>
        <dbReference type="HAMAP-Rule" id="MF_01109"/>
    </source>
</evidence>
<reference key="1">
    <citation type="journal article" date="2006" name="J. Bacteriol.">
        <title>The genome sequence of Methanosphaera stadtmanae reveals why this human intestinal archaeon is restricted to methanol and H2 for methane formation and ATP synthesis.</title>
        <authorList>
            <person name="Fricke W.F."/>
            <person name="Seedorf H."/>
            <person name="Henne A."/>
            <person name="Kruer M."/>
            <person name="Liesegang H."/>
            <person name="Hedderich R."/>
            <person name="Gottschalk G."/>
            <person name="Thauer R.K."/>
        </authorList>
    </citation>
    <scope>NUCLEOTIDE SEQUENCE [LARGE SCALE GENOMIC DNA]</scope>
    <source>
        <strain>ATCC 43021 / DSM 3091 / JCM 11832 / MCB-3</strain>
    </source>
</reference>
<dbReference type="EC" id="2.1.3.3" evidence="2"/>
<dbReference type="EMBL" id="CP000102">
    <property type="protein sequence ID" value="ABC56450.1"/>
    <property type="molecule type" value="Genomic_DNA"/>
</dbReference>
<dbReference type="RefSeq" id="WP_011405649.1">
    <property type="nucleotide sequence ID" value="NC_007681.1"/>
</dbReference>
<dbReference type="SMR" id="Q2NI83"/>
<dbReference type="STRING" id="339860.Msp_0031"/>
<dbReference type="GeneID" id="41324603"/>
<dbReference type="KEGG" id="mst:Msp_0031"/>
<dbReference type="eggNOG" id="arCOG00912">
    <property type="taxonomic scope" value="Archaea"/>
</dbReference>
<dbReference type="HOGENOM" id="CLU_043846_3_2_2"/>
<dbReference type="OrthoDB" id="4696at2157"/>
<dbReference type="UniPathway" id="UPA00068">
    <property type="reaction ID" value="UER00112"/>
</dbReference>
<dbReference type="Proteomes" id="UP000001931">
    <property type="component" value="Chromosome"/>
</dbReference>
<dbReference type="GO" id="GO:0005737">
    <property type="term" value="C:cytoplasm"/>
    <property type="evidence" value="ECO:0007669"/>
    <property type="project" value="UniProtKB-SubCell"/>
</dbReference>
<dbReference type="GO" id="GO:0016597">
    <property type="term" value="F:amino acid binding"/>
    <property type="evidence" value="ECO:0007669"/>
    <property type="project" value="InterPro"/>
</dbReference>
<dbReference type="GO" id="GO:0004585">
    <property type="term" value="F:ornithine carbamoyltransferase activity"/>
    <property type="evidence" value="ECO:0007669"/>
    <property type="project" value="UniProtKB-UniRule"/>
</dbReference>
<dbReference type="GO" id="GO:0042450">
    <property type="term" value="P:arginine biosynthetic process via ornithine"/>
    <property type="evidence" value="ECO:0007669"/>
    <property type="project" value="TreeGrafter"/>
</dbReference>
<dbReference type="GO" id="GO:0019240">
    <property type="term" value="P:citrulline biosynthetic process"/>
    <property type="evidence" value="ECO:0007669"/>
    <property type="project" value="TreeGrafter"/>
</dbReference>
<dbReference type="GO" id="GO:0006526">
    <property type="term" value="P:L-arginine biosynthetic process"/>
    <property type="evidence" value="ECO:0007669"/>
    <property type="project" value="UniProtKB-UniRule"/>
</dbReference>
<dbReference type="FunFam" id="3.40.50.1370:FF:000008">
    <property type="entry name" value="Ornithine carbamoyltransferase"/>
    <property type="match status" value="1"/>
</dbReference>
<dbReference type="Gene3D" id="3.40.50.1370">
    <property type="entry name" value="Aspartate/ornithine carbamoyltransferase"/>
    <property type="match status" value="2"/>
</dbReference>
<dbReference type="HAMAP" id="MF_01109">
    <property type="entry name" value="OTCase"/>
    <property type="match status" value="1"/>
</dbReference>
<dbReference type="InterPro" id="IPR006132">
    <property type="entry name" value="Asp/Orn_carbamoyltranf_P-bd"/>
</dbReference>
<dbReference type="InterPro" id="IPR006130">
    <property type="entry name" value="Asp/Orn_carbamoylTrfase"/>
</dbReference>
<dbReference type="InterPro" id="IPR036901">
    <property type="entry name" value="Asp/Orn_carbamoylTrfase_sf"/>
</dbReference>
<dbReference type="InterPro" id="IPR006131">
    <property type="entry name" value="Asp_carbamoyltransf_Asp/Orn-bd"/>
</dbReference>
<dbReference type="InterPro" id="IPR002292">
    <property type="entry name" value="Orn/put_carbamltrans"/>
</dbReference>
<dbReference type="InterPro" id="IPR024904">
    <property type="entry name" value="OTCase_ArgI"/>
</dbReference>
<dbReference type="NCBIfam" id="TIGR00658">
    <property type="entry name" value="orni_carb_tr"/>
    <property type="match status" value="1"/>
</dbReference>
<dbReference type="NCBIfam" id="NF001986">
    <property type="entry name" value="PRK00779.1"/>
    <property type="match status" value="1"/>
</dbReference>
<dbReference type="PANTHER" id="PTHR45753">
    <property type="entry name" value="ORNITHINE CARBAMOYLTRANSFERASE, MITOCHONDRIAL"/>
    <property type="match status" value="1"/>
</dbReference>
<dbReference type="PANTHER" id="PTHR45753:SF3">
    <property type="entry name" value="ORNITHINE TRANSCARBAMYLASE, MITOCHONDRIAL"/>
    <property type="match status" value="1"/>
</dbReference>
<dbReference type="Pfam" id="PF00185">
    <property type="entry name" value="OTCace"/>
    <property type="match status" value="1"/>
</dbReference>
<dbReference type="Pfam" id="PF02729">
    <property type="entry name" value="OTCace_N"/>
    <property type="match status" value="1"/>
</dbReference>
<dbReference type="PRINTS" id="PR00100">
    <property type="entry name" value="AOTCASE"/>
</dbReference>
<dbReference type="PRINTS" id="PR00102">
    <property type="entry name" value="OTCASE"/>
</dbReference>
<dbReference type="SUPFAM" id="SSF53671">
    <property type="entry name" value="Aspartate/ornithine carbamoyltransferase"/>
    <property type="match status" value="1"/>
</dbReference>
<dbReference type="PROSITE" id="PS00097">
    <property type="entry name" value="CARBAMOYLTRANSFERASE"/>
    <property type="match status" value="1"/>
</dbReference>
<organism>
    <name type="scientific">Methanosphaera stadtmanae (strain ATCC 43021 / DSM 3091 / JCM 11832 / MCB-3)</name>
    <dbReference type="NCBI Taxonomy" id="339860"/>
    <lineage>
        <taxon>Archaea</taxon>
        <taxon>Methanobacteriati</taxon>
        <taxon>Methanobacteriota</taxon>
        <taxon>Methanomada group</taxon>
        <taxon>Methanobacteria</taxon>
        <taxon>Methanobacteriales</taxon>
        <taxon>Methanobacteriaceae</taxon>
        <taxon>Methanosphaera</taxon>
    </lineage>
</organism>
<gene>
    <name evidence="2" type="primary">argF</name>
    <name type="ordered locus">Msp_0031</name>
</gene>
<keyword id="KW-0028">Amino-acid biosynthesis</keyword>
<keyword id="KW-0055">Arginine biosynthesis</keyword>
<keyword id="KW-0963">Cytoplasm</keyword>
<keyword id="KW-1185">Reference proteome</keyword>
<keyword id="KW-0808">Transferase</keyword>
<name>OTC_METST</name>
<protein>
    <recommendedName>
        <fullName evidence="2">Ornithine carbamoyltransferase</fullName>
        <shortName evidence="2">OTCase</shortName>
        <ecNumber evidence="2">2.1.3.3</ecNumber>
    </recommendedName>
</protein>
<proteinExistence type="inferred from homology"/>
<comment type="function">
    <text evidence="1">Reversibly catalyzes the transfer of the carbamoyl group from carbamoyl phosphate (CP) to the N(epsilon) atom of ornithine (ORN) to produce L-citrulline.</text>
</comment>
<comment type="catalytic activity">
    <reaction evidence="2">
        <text>carbamoyl phosphate + L-ornithine = L-citrulline + phosphate + H(+)</text>
        <dbReference type="Rhea" id="RHEA:19513"/>
        <dbReference type="ChEBI" id="CHEBI:15378"/>
        <dbReference type="ChEBI" id="CHEBI:43474"/>
        <dbReference type="ChEBI" id="CHEBI:46911"/>
        <dbReference type="ChEBI" id="CHEBI:57743"/>
        <dbReference type="ChEBI" id="CHEBI:58228"/>
        <dbReference type="EC" id="2.1.3.3"/>
    </reaction>
</comment>
<comment type="pathway">
    <text evidence="2">Amino-acid biosynthesis; L-arginine biosynthesis; L-arginine from L-ornithine and carbamoyl phosphate: step 1/3.</text>
</comment>
<comment type="subcellular location">
    <subcellularLocation>
        <location evidence="2">Cytoplasm</location>
    </subcellularLocation>
</comment>
<comment type="similarity">
    <text evidence="2">Belongs to the aspartate/ornithine carbamoyltransferase superfamily. OTCase family.</text>
</comment>
<feature type="chain" id="PRO_1000065101" description="Ornithine carbamoyltransferase">
    <location>
        <begin position="1"/>
        <end position="302"/>
    </location>
</feature>
<feature type="binding site" evidence="2">
    <location>
        <begin position="47"/>
        <end position="50"/>
    </location>
    <ligand>
        <name>carbamoyl phosphate</name>
        <dbReference type="ChEBI" id="CHEBI:58228"/>
    </ligand>
</feature>
<feature type="binding site" evidence="2">
    <location>
        <position position="74"/>
    </location>
    <ligand>
        <name>carbamoyl phosphate</name>
        <dbReference type="ChEBI" id="CHEBI:58228"/>
    </ligand>
</feature>
<feature type="binding site" evidence="2">
    <location>
        <position position="98"/>
    </location>
    <ligand>
        <name>carbamoyl phosphate</name>
        <dbReference type="ChEBI" id="CHEBI:58228"/>
    </ligand>
</feature>
<feature type="binding site" evidence="2">
    <location>
        <begin position="125"/>
        <end position="128"/>
    </location>
    <ligand>
        <name>carbamoyl phosphate</name>
        <dbReference type="ChEBI" id="CHEBI:58228"/>
    </ligand>
</feature>
<feature type="binding site" evidence="2">
    <location>
        <position position="156"/>
    </location>
    <ligand>
        <name>L-ornithine</name>
        <dbReference type="ChEBI" id="CHEBI:46911"/>
    </ligand>
</feature>
<feature type="binding site" evidence="2">
    <location>
        <position position="220"/>
    </location>
    <ligand>
        <name>L-ornithine</name>
        <dbReference type="ChEBI" id="CHEBI:46911"/>
    </ligand>
</feature>
<feature type="binding site" evidence="2">
    <location>
        <begin position="224"/>
        <end position="225"/>
    </location>
    <ligand>
        <name>L-ornithine</name>
        <dbReference type="ChEBI" id="CHEBI:46911"/>
    </ligand>
</feature>
<feature type="binding site" evidence="2">
    <location>
        <begin position="260"/>
        <end position="261"/>
    </location>
    <ligand>
        <name>carbamoyl phosphate</name>
        <dbReference type="ChEBI" id="CHEBI:58228"/>
    </ligand>
</feature>
<feature type="binding site" evidence="2">
    <location>
        <position position="288"/>
    </location>
    <ligand>
        <name>carbamoyl phosphate</name>
        <dbReference type="ChEBI" id="CHEBI:58228"/>
    </ligand>
</feature>